<gene>
    <name evidence="1" type="primary">psbA</name>
</gene>
<protein>
    <recommendedName>
        <fullName evidence="1">Photosystem II protein D1</fullName>
        <shortName evidence="1">PSII D1 protein</shortName>
        <ecNumber evidence="1">1.10.3.9</ecNumber>
    </recommendedName>
    <alternativeName>
        <fullName evidence="1">Photosystem II Q(B) protein</fullName>
    </alternativeName>
</protein>
<sequence>MTAILERRESASVWGRFCNWITSTENRLYIGWFGVLMIPTLLTATSVFIIAFIAAPPVDIDGIREPVAGSLLYGNNIISGAIIPTSAAIGLHFYPIWEASSVDEWLYNGGPYELIVLHFLLGVACYMGREWELSFRLGMRPWIAVAYSAPVAAATAVFLIYPIGQGSFSDGMPLGISGTFNFMIVFQAEHNILMHPFHMLGVAGVFGGSLFSAMHGSLVTSSLIRETTESESANAGYKFGQEEETYNIVAAHGYFGRLIFQYASFNNSRSLHFFLAAWPVVGIWFTALGISTMAFNLNGFNFNQSVVDSQGRVINTWADIINRANLGMEVMHERNAHNFPLDLASVELDSIDG</sequence>
<organism>
    <name type="scientific">Gnetum parvifolium</name>
    <name type="common">Small-leaved jointfir</name>
    <name type="synonym">Gnetum scandens var. parvifolium</name>
    <dbReference type="NCBI Taxonomy" id="33153"/>
    <lineage>
        <taxon>Eukaryota</taxon>
        <taxon>Viridiplantae</taxon>
        <taxon>Streptophyta</taxon>
        <taxon>Embryophyta</taxon>
        <taxon>Tracheophyta</taxon>
        <taxon>Spermatophyta</taxon>
        <taxon>Gnetopsida</taxon>
        <taxon>Gnetidae</taxon>
        <taxon>Gnetales</taxon>
        <taxon>Gnetaceae</taxon>
        <taxon>Gnetum</taxon>
    </lineage>
</organism>
<proteinExistence type="inferred from homology"/>
<dbReference type="EC" id="1.10.3.9" evidence="1"/>
<dbReference type="EMBL" id="AB295924">
    <property type="protein sequence ID" value="BAF64873.1"/>
    <property type="molecule type" value="Genomic_DNA"/>
</dbReference>
<dbReference type="EMBL" id="AP009569">
    <property type="protein sequence ID" value="BAH11245.1"/>
    <property type="molecule type" value="Genomic_DNA"/>
</dbReference>
<dbReference type="RefSeq" id="YP_002519735.1">
    <property type="nucleotide sequence ID" value="NC_011942.1"/>
</dbReference>
<dbReference type="SMR" id="A6BM28"/>
<dbReference type="GeneID" id="7368216"/>
<dbReference type="GO" id="GO:0009535">
    <property type="term" value="C:chloroplast thylakoid membrane"/>
    <property type="evidence" value="ECO:0007669"/>
    <property type="project" value="UniProtKB-SubCell"/>
</dbReference>
<dbReference type="GO" id="GO:0009523">
    <property type="term" value="C:photosystem II"/>
    <property type="evidence" value="ECO:0007669"/>
    <property type="project" value="UniProtKB-KW"/>
</dbReference>
<dbReference type="GO" id="GO:0016168">
    <property type="term" value="F:chlorophyll binding"/>
    <property type="evidence" value="ECO:0007669"/>
    <property type="project" value="UniProtKB-UniRule"/>
</dbReference>
<dbReference type="GO" id="GO:0045156">
    <property type="term" value="F:electron transporter, transferring electrons within the cyclic electron transport pathway of photosynthesis activity"/>
    <property type="evidence" value="ECO:0007669"/>
    <property type="project" value="InterPro"/>
</dbReference>
<dbReference type="GO" id="GO:0005506">
    <property type="term" value="F:iron ion binding"/>
    <property type="evidence" value="ECO:0007669"/>
    <property type="project" value="UniProtKB-UniRule"/>
</dbReference>
<dbReference type="GO" id="GO:0016682">
    <property type="term" value="F:oxidoreductase activity, acting on diphenols and related substances as donors, oxygen as acceptor"/>
    <property type="evidence" value="ECO:0007669"/>
    <property type="project" value="UniProtKB-UniRule"/>
</dbReference>
<dbReference type="GO" id="GO:0010242">
    <property type="term" value="F:oxygen evolving activity"/>
    <property type="evidence" value="ECO:0007669"/>
    <property type="project" value="UniProtKB-EC"/>
</dbReference>
<dbReference type="GO" id="GO:0009772">
    <property type="term" value="P:photosynthetic electron transport in photosystem II"/>
    <property type="evidence" value="ECO:0007669"/>
    <property type="project" value="InterPro"/>
</dbReference>
<dbReference type="GO" id="GO:0009635">
    <property type="term" value="P:response to herbicide"/>
    <property type="evidence" value="ECO:0007669"/>
    <property type="project" value="UniProtKB-KW"/>
</dbReference>
<dbReference type="CDD" id="cd09289">
    <property type="entry name" value="Photosystem-II_D1"/>
    <property type="match status" value="1"/>
</dbReference>
<dbReference type="FunFam" id="1.20.85.10:FF:000002">
    <property type="entry name" value="Photosystem II protein D1"/>
    <property type="match status" value="1"/>
</dbReference>
<dbReference type="Gene3D" id="1.20.85.10">
    <property type="entry name" value="Photosystem II protein D1-like"/>
    <property type="match status" value="1"/>
</dbReference>
<dbReference type="HAMAP" id="MF_01379">
    <property type="entry name" value="PSII_PsbA_D1"/>
    <property type="match status" value="1"/>
</dbReference>
<dbReference type="InterPro" id="IPR055266">
    <property type="entry name" value="D1/D2"/>
</dbReference>
<dbReference type="InterPro" id="IPR036854">
    <property type="entry name" value="Photo_II_D1/D2_sf"/>
</dbReference>
<dbReference type="InterPro" id="IPR000484">
    <property type="entry name" value="Photo_RC_L/M"/>
</dbReference>
<dbReference type="InterPro" id="IPR055265">
    <property type="entry name" value="Photo_RC_L/M_CS"/>
</dbReference>
<dbReference type="InterPro" id="IPR005867">
    <property type="entry name" value="PSII_D1"/>
</dbReference>
<dbReference type="NCBIfam" id="TIGR01151">
    <property type="entry name" value="psbA"/>
    <property type="match status" value="1"/>
</dbReference>
<dbReference type="PANTHER" id="PTHR33149:SF12">
    <property type="entry name" value="PHOTOSYSTEM II D2 PROTEIN"/>
    <property type="match status" value="1"/>
</dbReference>
<dbReference type="PANTHER" id="PTHR33149">
    <property type="entry name" value="PHOTOSYSTEM II PROTEIN D1"/>
    <property type="match status" value="1"/>
</dbReference>
<dbReference type="Pfam" id="PF00124">
    <property type="entry name" value="Photo_RC"/>
    <property type="match status" value="1"/>
</dbReference>
<dbReference type="PRINTS" id="PR00256">
    <property type="entry name" value="REACTNCENTRE"/>
</dbReference>
<dbReference type="SUPFAM" id="SSF81483">
    <property type="entry name" value="Bacterial photosystem II reaction centre, L and M subunits"/>
    <property type="match status" value="1"/>
</dbReference>
<dbReference type="PROSITE" id="PS00244">
    <property type="entry name" value="REACTION_CENTER"/>
    <property type="match status" value="1"/>
</dbReference>
<feature type="initiator methionine" description="Removed" evidence="1">
    <location>
        <position position="1"/>
    </location>
</feature>
<feature type="chain" id="PRO_0000298912" description="Photosystem II protein D1" evidence="1">
    <location>
        <begin position="2"/>
        <end position="344"/>
    </location>
</feature>
<feature type="propeptide" id="PRO_0000316454" evidence="1">
    <location>
        <begin position="345"/>
        <end position="353"/>
    </location>
</feature>
<feature type="transmembrane region" description="Helical" evidence="1">
    <location>
        <begin position="29"/>
        <end position="46"/>
    </location>
</feature>
<feature type="transmembrane region" description="Helical" evidence="1">
    <location>
        <begin position="118"/>
        <end position="133"/>
    </location>
</feature>
<feature type="transmembrane region" description="Helical" evidence="1">
    <location>
        <begin position="142"/>
        <end position="156"/>
    </location>
</feature>
<feature type="transmembrane region" description="Helical" evidence="1">
    <location>
        <begin position="197"/>
        <end position="218"/>
    </location>
</feature>
<feature type="transmembrane region" description="Helical" evidence="1">
    <location>
        <begin position="274"/>
        <end position="288"/>
    </location>
</feature>
<feature type="binding site" description="axial binding residue" evidence="1">
    <location>
        <position position="118"/>
    </location>
    <ligand>
        <name>chlorophyll a</name>
        <dbReference type="ChEBI" id="CHEBI:58416"/>
        <label>ChlzD1</label>
    </ligand>
    <ligandPart>
        <name>Mg</name>
        <dbReference type="ChEBI" id="CHEBI:25107"/>
    </ligandPart>
</feature>
<feature type="binding site" evidence="1">
    <location>
        <position position="126"/>
    </location>
    <ligand>
        <name>pheophytin a</name>
        <dbReference type="ChEBI" id="CHEBI:136840"/>
        <label>D1</label>
    </ligand>
</feature>
<feature type="binding site" evidence="1">
    <location>
        <position position="170"/>
    </location>
    <ligand>
        <name>[CaMn4O5] cluster</name>
        <dbReference type="ChEBI" id="CHEBI:189552"/>
    </ligand>
</feature>
<feature type="binding site" evidence="1">
    <location>
        <position position="189"/>
    </location>
    <ligand>
        <name>[CaMn4O5] cluster</name>
        <dbReference type="ChEBI" id="CHEBI:189552"/>
    </ligand>
</feature>
<feature type="binding site" description="axial binding residue" evidence="1">
    <location>
        <position position="198"/>
    </location>
    <ligand>
        <name>chlorophyll a</name>
        <dbReference type="ChEBI" id="CHEBI:58416"/>
        <label>PD1</label>
    </ligand>
    <ligandPart>
        <name>Mg</name>
        <dbReference type="ChEBI" id="CHEBI:25107"/>
    </ligandPart>
</feature>
<feature type="binding site" evidence="1">
    <location>
        <position position="215"/>
    </location>
    <ligand>
        <name>a quinone</name>
        <dbReference type="ChEBI" id="CHEBI:132124"/>
        <label>B</label>
    </ligand>
</feature>
<feature type="binding site" evidence="1">
    <location>
        <position position="215"/>
    </location>
    <ligand>
        <name>Fe cation</name>
        <dbReference type="ChEBI" id="CHEBI:24875"/>
        <note>ligand shared with heterodimeric partner</note>
    </ligand>
</feature>
<feature type="binding site" evidence="1">
    <location>
        <begin position="264"/>
        <end position="265"/>
    </location>
    <ligand>
        <name>a quinone</name>
        <dbReference type="ChEBI" id="CHEBI:132124"/>
        <label>B</label>
    </ligand>
</feature>
<feature type="binding site" evidence="1">
    <location>
        <position position="272"/>
    </location>
    <ligand>
        <name>Fe cation</name>
        <dbReference type="ChEBI" id="CHEBI:24875"/>
        <note>ligand shared with heterodimeric partner</note>
    </ligand>
</feature>
<feature type="binding site" evidence="1">
    <location>
        <position position="332"/>
    </location>
    <ligand>
        <name>[CaMn4O5] cluster</name>
        <dbReference type="ChEBI" id="CHEBI:189552"/>
    </ligand>
</feature>
<feature type="binding site" evidence="1">
    <location>
        <position position="333"/>
    </location>
    <ligand>
        <name>[CaMn4O5] cluster</name>
        <dbReference type="ChEBI" id="CHEBI:189552"/>
    </ligand>
</feature>
<feature type="binding site" evidence="1">
    <location>
        <position position="342"/>
    </location>
    <ligand>
        <name>[CaMn4O5] cluster</name>
        <dbReference type="ChEBI" id="CHEBI:189552"/>
    </ligand>
</feature>
<feature type="binding site" evidence="1">
    <location>
        <position position="344"/>
    </location>
    <ligand>
        <name>[CaMn4O5] cluster</name>
        <dbReference type="ChEBI" id="CHEBI:189552"/>
    </ligand>
</feature>
<feature type="site" description="Tyrosine radical intermediate" evidence="1">
    <location>
        <position position="161"/>
    </location>
</feature>
<feature type="site" description="Stabilizes free radical intermediate" evidence="1">
    <location>
        <position position="190"/>
    </location>
</feature>
<feature type="site" description="Cleavage; by CTPA" evidence="1">
    <location>
        <begin position="344"/>
        <end position="345"/>
    </location>
</feature>
<feature type="modified residue" description="N-acetylthreonine" evidence="1">
    <location>
        <position position="2"/>
    </location>
</feature>
<feature type="modified residue" description="Phosphothreonine" evidence="1">
    <location>
        <position position="2"/>
    </location>
</feature>
<reference key="1">
    <citation type="journal article" date="2007" name="Mol. Biol. Evol.">
        <title>Chloroplast genome (cpDNA) of Cycas taitungensis and 56 cp protein-coding genes of Gnetum parvifolium: insights into cpDNA evolution and phylogeny of extant seed plants.</title>
        <authorList>
            <person name="Wu C.-S."/>
            <person name="Wang Y.-N."/>
            <person name="Liu S.-M."/>
            <person name="Chaw S.-M."/>
        </authorList>
    </citation>
    <scope>NUCLEOTIDE SEQUENCE [LARGE SCALE GENOMIC DNA]</scope>
</reference>
<reference key="2">
    <citation type="journal article" date="2009" name="Mol. Phylogenet. Evol.">
        <title>Evolution of reduced and compact chloroplast genomes (cpDNAs) in gnetophytes: Selection toward a lower-cost strategy.</title>
        <authorList>
            <person name="Wu C.-S."/>
            <person name="Lai Y.-T."/>
            <person name="Lin C.-P."/>
            <person name="Wang Y.-N."/>
            <person name="Chaw S.-M."/>
        </authorList>
    </citation>
    <scope>NUCLEOTIDE SEQUENCE [LARGE SCALE GENOMIC DNA]</scope>
</reference>
<geneLocation type="chloroplast"/>
<keyword id="KW-0007">Acetylation</keyword>
<keyword id="KW-0106">Calcium</keyword>
<keyword id="KW-0148">Chlorophyll</keyword>
<keyword id="KW-0150">Chloroplast</keyword>
<keyword id="KW-0157">Chromophore</keyword>
<keyword id="KW-0249">Electron transport</keyword>
<keyword id="KW-0359">Herbicide resistance</keyword>
<keyword id="KW-0408">Iron</keyword>
<keyword id="KW-0460">Magnesium</keyword>
<keyword id="KW-0464">Manganese</keyword>
<keyword id="KW-0472">Membrane</keyword>
<keyword id="KW-0479">Metal-binding</keyword>
<keyword id="KW-0560">Oxidoreductase</keyword>
<keyword id="KW-0597">Phosphoprotein</keyword>
<keyword id="KW-0602">Photosynthesis</keyword>
<keyword id="KW-0604">Photosystem II</keyword>
<keyword id="KW-0934">Plastid</keyword>
<keyword id="KW-0793">Thylakoid</keyword>
<keyword id="KW-0812">Transmembrane</keyword>
<keyword id="KW-1133">Transmembrane helix</keyword>
<keyword id="KW-0813">Transport</keyword>
<name>PSBA_GNEPA</name>
<evidence type="ECO:0000255" key="1">
    <source>
        <dbReference type="HAMAP-Rule" id="MF_01379"/>
    </source>
</evidence>
<accession>A6BM28</accession>
<accession>B7ZI65</accession>
<comment type="function">
    <text evidence="1">Photosystem II (PSII) is a light-driven water:plastoquinone oxidoreductase that uses light energy to abstract electrons from H(2)O, generating O(2) and a proton gradient subsequently used for ATP formation. It consists of a core antenna complex that captures photons, and an electron transfer chain that converts photonic excitation into a charge separation. The D1/D2 (PsbA/PsbD) reaction center heterodimer binds P680, the primary electron donor of PSII as well as several subsequent electron acceptors.</text>
</comment>
<comment type="catalytic activity">
    <reaction evidence="1">
        <text>2 a plastoquinone + 4 hnu + 2 H2O = 2 a plastoquinol + O2</text>
        <dbReference type="Rhea" id="RHEA:36359"/>
        <dbReference type="Rhea" id="RHEA-COMP:9561"/>
        <dbReference type="Rhea" id="RHEA-COMP:9562"/>
        <dbReference type="ChEBI" id="CHEBI:15377"/>
        <dbReference type="ChEBI" id="CHEBI:15379"/>
        <dbReference type="ChEBI" id="CHEBI:17757"/>
        <dbReference type="ChEBI" id="CHEBI:30212"/>
        <dbReference type="ChEBI" id="CHEBI:62192"/>
        <dbReference type="EC" id="1.10.3.9"/>
    </reaction>
</comment>
<comment type="cofactor">
    <text evidence="1">The D1/D2 heterodimer binds P680, chlorophylls that are the primary electron donor of PSII, and subsequent electron acceptors. It shares a non-heme iron and each subunit binds pheophytin, quinone, additional chlorophylls, carotenoids and lipids. D1 provides most of the ligands for the Mn4-Ca-O5 cluster of the oxygen-evolving complex (OEC). There is also a Cl(-1) ion associated with D1 and D2, which is required for oxygen evolution. The PSII complex binds additional chlorophylls, carotenoids and specific lipids.</text>
</comment>
<comment type="subunit">
    <text evidence="1">PSII is composed of 1 copy each of membrane proteins PsbA, PsbB, PsbC, PsbD, PsbE, PsbF, PsbH, PsbI, PsbJ, PsbK, PsbL, PsbM, PsbT, PsbX, PsbY, PsbZ, Psb30/Ycf12, at least 3 peripheral proteins of the oxygen-evolving complex and a large number of cofactors. It forms dimeric complexes.</text>
</comment>
<comment type="subcellular location">
    <subcellularLocation>
        <location evidence="1">Plastid</location>
        <location evidence="1">Chloroplast thylakoid membrane</location>
        <topology evidence="1">Multi-pass membrane protein</topology>
    </subcellularLocation>
</comment>
<comment type="PTM">
    <text evidence="1">Tyr-161 forms a radical intermediate that is referred to as redox-active TyrZ, YZ or Y-Z.</text>
</comment>
<comment type="PTM">
    <text evidence="1">C-terminally processed by CTPA; processing is essential to allow assembly of the oxygen-evolving complex and thus photosynthetic growth.</text>
</comment>
<comment type="miscellaneous">
    <text evidence="1">2 of the reaction center chlorophylls (ChlD1 and ChlD2) are entirely coordinated by water.</text>
</comment>
<comment type="miscellaneous">
    <text evidence="1">Herbicides such as atrazine, BNT, diuron or ioxynil bind in the Q(B) binding site and block subsequent electron transfer.</text>
</comment>
<comment type="similarity">
    <text evidence="1">Belongs to the reaction center PufL/M/PsbA/D family.</text>
</comment>